<comment type="cofactor">
    <cofactor evidence="1">
        <name>Fe(3+)</name>
        <dbReference type="ChEBI" id="CHEBI:29034"/>
    </cofactor>
    <text evidence="1">Binds 1 Fe(3+) ion per subunit.</text>
</comment>
<comment type="similarity">
    <text evidence="4">In the C-terminal section; belongs to the HupJ family.</text>
</comment>
<dbReference type="EMBL" id="Z15089">
    <property type="protein sequence ID" value="CAA78802.1"/>
    <property type="molecule type" value="Genomic_DNA"/>
</dbReference>
<dbReference type="EMBL" id="M55089">
    <property type="protein sequence ID" value="AAA72923.1"/>
    <property type="status" value="ALT_SEQ"/>
    <property type="molecule type" value="Genomic_DNA"/>
</dbReference>
<dbReference type="PIR" id="S32946">
    <property type="entry name" value="S25690"/>
</dbReference>
<dbReference type="SMR" id="Q03009"/>
<dbReference type="OMA" id="ECKICWT"/>
<dbReference type="GO" id="GO:0009055">
    <property type="term" value="F:electron transfer activity"/>
    <property type="evidence" value="ECO:0007669"/>
    <property type="project" value="TreeGrafter"/>
</dbReference>
<dbReference type="GO" id="GO:0005506">
    <property type="term" value="F:iron ion binding"/>
    <property type="evidence" value="ECO:0007669"/>
    <property type="project" value="InterPro"/>
</dbReference>
<dbReference type="GO" id="GO:0043448">
    <property type="term" value="P:alkane catabolic process"/>
    <property type="evidence" value="ECO:0007669"/>
    <property type="project" value="TreeGrafter"/>
</dbReference>
<dbReference type="CDD" id="cd00730">
    <property type="entry name" value="rubredoxin"/>
    <property type="match status" value="1"/>
</dbReference>
<dbReference type="Gene3D" id="2.20.28.10">
    <property type="match status" value="1"/>
</dbReference>
<dbReference type="Gene3D" id="3.30.1460.40">
    <property type="entry name" value="[NiFe]-hydrogenase assembly chaperone, HybE"/>
    <property type="match status" value="1"/>
</dbReference>
<dbReference type="InterPro" id="IPR023994">
    <property type="entry name" value="NiFe-hyd_HybE"/>
</dbReference>
<dbReference type="InterPro" id="IPR038530">
    <property type="entry name" value="NiFe-hyd_HybE_sf"/>
</dbReference>
<dbReference type="InterPro" id="IPR024934">
    <property type="entry name" value="Rubredoxin-like_dom"/>
</dbReference>
<dbReference type="InterPro" id="IPR024935">
    <property type="entry name" value="Rubredoxin_dom"/>
</dbReference>
<dbReference type="InterPro" id="IPR050526">
    <property type="entry name" value="Rubredoxin_ET"/>
</dbReference>
<dbReference type="InterPro" id="IPR018527">
    <property type="entry name" value="Rubredoxin_Fe_BS"/>
</dbReference>
<dbReference type="NCBIfam" id="TIGR03993">
    <property type="entry name" value="hydrog_HybE"/>
    <property type="match status" value="1"/>
</dbReference>
<dbReference type="PANTHER" id="PTHR47627">
    <property type="entry name" value="RUBREDOXIN"/>
    <property type="match status" value="1"/>
</dbReference>
<dbReference type="PANTHER" id="PTHR47627:SF1">
    <property type="entry name" value="RUBREDOXIN-1-RELATED"/>
    <property type="match status" value="1"/>
</dbReference>
<dbReference type="Pfam" id="PF11939">
    <property type="entry name" value="NiFe-hyd_HybE"/>
    <property type="match status" value="1"/>
</dbReference>
<dbReference type="Pfam" id="PF00301">
    <property type="entry name" value="Rubredoxin"/>
    <property type="match status" value="1"/>
</dbReference>
<dbReference type="PRINTS" id="PR00163">
    <property type="entry name" value="RUBREDOXIN"/>
</dbReference>
<dbReference type="SUPFAM" id="SSF57802">
    <property type="entry name" value="Rubredoxin-like"/>
    <property type="match status" value="1"/>
</dbReference>
<dbReference type="PROSITE" id="PS00202">
    <property type="entry name" value="RUBREDOXIN"/>
    <property type="match status" value="1"/>
</dbReference>
<dbReference type="PROSITE" id="PS50903">
    <property type="entry name" value="RUBREDOXIN_LIKE"/>
    <property type="match status" value="1"/>
</dbReference>
<protein>
    <recommendedName>
        <fullName>Probable rubredoxin HupJ</fullName>
    </recommendedName>
</protein>
<organism>
    <name type="scientific">Rhodobacter capsulatus</name>
    <name type="common">Rhodopseudomonas capsulata</name>
    <dbReference type="NCBI Taxonomy" id="1061"/>
    <lineage>
        <taxon>Bacteria</taxon>
        <taxon>Pseudomonadati</taxon>
        <taxon>Pseudomonadota</taxon>
        <taxon>Alphaproteobacteria</taxon>
        <taxon>Rhodobacterales</taxon>
        <taxon>Rhodobacter group</taxon>
        <taxon>Rhodobacter</taxon>
    </lineage>
</organism>
<sequence>MSGPTRAGFEGSYLGANDRISDLAIMECKICWTPYDPASGDEFRQVLPGTPFTALPEDWHCPNCDAPKAQFIVQSDPGAPALLEQNRVDAQVSALVADFREIWHSKMRDVPLVNKALSIEAVGFRSHEGRGLGVLVSPWFMNLIQLPAAGEDWSGLIPGVKEDLEFPSGLYEFIHNRREMVGGYKACSLYPTMGDFQTQMQAVDLARAVMIELFKAENRAETDRAAEIRASRTAELAALEAAEAEKAETAARAEAMAQPTRRRLISAGLAGEDEGAAE</sequence>
<feature type="chain" id="PRO_0000135057" description="Probable rubredoxin HupJ">
    <location>
        <begin position="1"/>
        <end position="278"/>
    </location>
</feature>
<feature type="domain" description="Rubredoxin-like" evidence="2">
    <location>
        <begin position="23"/>
        <end position="74"/>
    </location>
</feature>
<feature type="region of interest" description="Disordered" evidence="3">
    <location>
        <begin position="250"/>
        <end position="278"/>
    </location>
</feature>
<feature type="binding site" evidence="2">
    <location>
        <position position="28"/>
    </location>
    <ligand>
        <name>Fe cation</name>
        <dbReference type="ChEBI" id="CHEBI:24875"/>
    </ligand>
</feature>
<feature type="binding site" evidence="2">
    <location>
        <position position="31"/>
    </location>
    <ligand>
        <name>Fe cation</name>
        <dbReference type="ChEBI" id="CHEBI:24875"/>
    </ligand>
</feature>
<feature type="binding site" evidence="2">
    <location>
        <position position="61"/>
    </location>
    <ligand>
        <name>Fe cation</name>
        <dbReference type="ChEBI" id="CHEBI:24875"/>
    </ligand>
</feature>
<feature type="binding site" evidence="2">
    <location>
        <position position="64"/>
    </location>
    <ligand>
        <name>Fe cation</name>
        <dbReference type="ChEBI" id="CHEBI:24875"/>
    </ligand>
</feature>
<evidence type="ECO:0000250" key="1"/>
<evidence type="ECO:0000255" key="2">
    <source>
        <dbReference type="PROSITE-ProRule" id="PRU00241"/>
    </source>
</evidence>
<evidence type="ECO:0000256" key="3">
    <source>
        <dbReference type="SAM" id="MobiDB-lite"/>
    </source>
</evidence>
<evidence type="ECO:0000305" key="4"/>
<accession>Q03009</accession>
<reference key="1">
    <citation type="journal article" date="1993" name="Mol. Microbiol.">
        <title>Organization of the genes necessary for hydrogenase expression in Rhodobacter capsulatus. Sequence analysis and identification of two hyp regulatory mutants.</title>
        <authorList>
            <person name="Colbeau A."/>
            <person name="Richaud P."/>
            <person name="Toussaint B."/>
            <person name="Caballero F.J."/>
            <person name="Elster C."/>
            <person name="Delphin C."/>
            <person name="Smith R.L."/>
            <person name="Chabert J."/>
            <person name="Vignais P.M."/>
        </authorList>
    </citation>
    <scope>NUCLEOTIDE SEQUENCE [GENOMIC DNA]</scope>
    <source>
        <strain>ATCC 33303 / B10</strain>
    </source>
</reference>
<reference key="2">
    <citation type="journal article" date="1991" name="J. Bacteriol.">
        <title>Clustering of genes necessary for hydrogen oxidation in Rhodobacter capsulatus.</title>
        <authorList>
            <person name="Xu H.-W."/>
            <person name="Wall J.D."/>
        </authorList>
    </citation>
    <scope>PRELIMINARY NUCLEOTIDE SEQUENCE [GENOMIC DNA] OF 172-278</scope>
</reference>
<name>HUPJ_RHOCA</name>
<proteinExistence type="inferred from homology"/>
<gene>
    <name type="primary">hupJ</name>
</gene>
<keyword id="KW-0249">Electron transport</keyword>
<keyword id="KW-0408">Iron</keyword>
<keyword id="KW-0479">Metal-binding</keyword>
<keyword id="KW-0813">Transport</keyword>